<accession>Q74ZK6</accession>
<evidence type="ECO:0000250" key="1"/>
<evidence type="ECO:0000255" key="2">
    <source>
        <dbReference type="PROSITE-ProRule" id="PRU01047"/>
    </source>
</evidence>
<evidence type="ECO:0000256" key="3">
    <source>
        <dbReference type="SAM" id="MobiDB-lite"/>
    </source>
</evidence>
<protein>
    <recommendedName>
        <fullName>Nucleolar GTP-binding protein 1</fullName>
    </recommendedName>
</protein>
<sequence>MQLSWKDIPTVPTSNDMLDIVLNRTQRKTPTVIRAGFKITRIRAFYMRKVKFTCEGFIEKFDDILKGFPNINDVHPFHRDLMDTLYEKNHYKVSLASVSRAKTLVEQVARDYVRLLKFGQSLFQCKQLKRAALGRMATIMKKLKDPLVYLEQVRQHLGRLPSIDPNTRTLLICGYPNVGKSSFLRCITKADVEVQPYAFTTKSLYVGHFDYKYLRFQAIDTPGILDRPTEEMNNIEMQSIYAIAHLRSTVLYFMDLSEQCGFTIEAQVKLFHSIKPLFANKSVMVVINKTDIIRPEDLDEERQEMLKSIMDFPGVEIMTTSCINEENVMAVRNKACEKLLASRIENKLKSQTRITNVLNKIHVAHPQKRDDGVERTPYIPEAFKNVKKYDPEDPERRPLARDIEAENGGAGVFNINLKDSYLLENDEWKNDVMPEILNGRNVYDFLDPDIAAKLQALEEEEERLEAEGFYESDDDAIEGMDDEDVEDIREKAAWIRDKQKKMINAARSRKALKNRGTMPRSKMAKSFEDMEKHMSSLGHNMSALQSKQSAAAAKNRYTESGADIVYGNNESAKTAGKLRQSDRLMDGVADASMRSKADRMAKLHRRERNRQARQGEADRHATASLPKHLFSGKRGIGSNDRR</sequence>
<proteinExistence type="inferred from homology"/>
<reference key="1">
    <citation type="journal article" date="2004" name="Science">
        <title>The Ashbya gossypii genome as a tool for mapping the ancient Saccharomyces cerevisiae genome.</title>
        <authorList>
            <person name="Dietrich F.S."/>
            <person name="Voegeli S."/>
            <person name="Brachat S."/>
            <person name="Lerch A."/>
            <person name="Gates K."/>
            <person name="Steiner S."/>
            <person name="Mohr C."/>
            <person name="Poehlmann R."/>
            <person name="Luedi P."/>
            <person name="Choi S."/>
            <person name="Wing R.A."/>
            <person name="Flavier A."/>
            <person name="Gaffney T.D."/>
            <person name="Philippsen P."/>
        </authorList>
    </citation>
    <scope>NUCLEOTIDE SEQUENCE [LARGE SCALE GENOMIC DNA]</scope>
    <source>
        <strain>ATCC 10895 / CBS 109.51 / FGSC 9923 / NRRL Y-1056</strain>
    </source>
</reference>
<reference key="2">
    <citation type="journal article" date="2013" name="G3 (Bethesda)">
        <title>Genomes of Ashbya fungi isolated from insects reveal four mating-type loci, numerous translocations, lack of transposons, and distinct gene duplications.</title>
        <authorList>
            <person name="Dietrich F.S."/>
            <person name="Voegeli S."/>
            <person name="Kuo S."/>
            <person name="Philippsen P."/>
        </authorList>
    </citation>
    <scope>GENOME REANNOTATION</scope>
    <source>
        <strain>ATCC 10895 / CBS 109.51 / FGSC 9923 / NRRL Y-1056</strain>
    </source>
</reference>
<keyword id="KW-0342">GTP-binding</keyword>
<keyword id="KW-0547">Nucleotide-binding</keyword>
<keyword id="KW-0539">Nucleus</keyword>
<keyword id="KW-1185">Reference proteome</keyword>
<keyword id="KW-0690">Ribosome biogenesis</keyword>
<comment type="function">
    <text evidence="1">Involved in the biogenesis of the 60S ribosomal subunit.</text>
</comment>
<comment type="subcellular location">
    <subcellularLocation>
        <location evidence="1">Nucleus</location>
        <location evidence="1">Nucleolus</location>
    </subcellularLocation>
</comment>
<comment type="similarity">
    <text evidence="2">Belongs to the TRAFAC class OBG-HflX-like GTPase superfamily. OBG GTPase family. NOG subfamily.</text>
</comment>
<dbReference type="EMBL" id="AE016820">
    <property type="protein sequence ID" value="AAS54684.1"/>
    <property type="molecule type" value="Genomic_DNA"/>
</dbReference>
<dbReference type="RefSeq" id="NP_986860.1">
    <property type="nucleotide sequence ID" value="NM_211922.1"/>
</dbReference>
<dbReference type="SMR" id="Q74ZK6"/>
<dbReference type="FunCoup" id="Q74ZK6">
    <property type="interactions" value="1410"/>
</dbReference>
<dbReference type="STRING" id="284811.Q74ZK6"/>
<dbReference type="EnsemblFungi" id="AAS54684">
    <property type="protein sequence ID" value="AAS54684"/>
    <property type="gene ID" value="AGOS_AGR194W"/>
</dbReference>
<dbReference type="GeneID" id="4623162"/>
<dbReference type="KEGG" id="ago:AGOS_AGR194W"/>
<dbReference type="eggNOG" id="KOG1490">
    <property type="taxonomic scope" value="Eukaryota"/>
</dbReference>
<dbReference type="HOGENOM" id="CLU_011784_4_1_1"/>
<dbReference type="InParanoid" id="Q74ZK6"/>
<dbReference type="OMA" id="EWKNDVM"/>
<dbReference type="OrthoDB" id="415015at2759"/>
<dbReference type="Proteomes" id="UP000000591">
    <property type="component" value="Chromosome VII"/>
</dbReference>
<dbReference type="GO" id="GO:0005737">
    <property type="term" value="C:cytoplasm"/>
    <property type="evidence" value="ECO:0007669"/>
    <property type="project" value="EnsemblFungi"/>
</dbReference>
<dbReference type="GO" id="GO:0005730">
    <property type="term" value="C:nucleolus"/>
    <property type="evidence" value="ECO:0000318"/>
    <property type="project" value="GO_Central"/>
</dbReference>
<dbReference type="GO" id="GO:0030687">
    <property type="term" value="C:preribosome, large subunit precursor"/>
    <property type="evidence" value="ECO:0007669"/>
    <property type="project" value="EnsemblFungi"/>
</dbReference>
<dbReference type="GO" id="GO:0005525">
    <property type="term" value="F:GTP binding"/>
    <property type="evidence" value="ECO:0007669"/>
    <property type="project" value="UniProtKB-KW"/>
</dbReference>
<dbReference type="GO" id="GO:0003924">
    <property type="term" value="F:GTPase activity"/>
    <property type="evidence" value="ECO:0000318"/>
    <property type="project" value="GO_Central"/>
</dbReference>
<dbReference type="GO" id="GO:0003723">
    <property type="term" value="F:RNA binding"/>
    <property type="evidence" value="ECO:0000318"/>
    <property type="project" value="GO_Central"/>
</dbReference>
<dbReference type="GO" id="GO:1902626">
    <property type="term" value="P:assembly of large subunit precursor of preribosome"/>
    <property type="evidence" value="ECO:0007669"/>
    <property type="project" value="EnsemblFungi"/>
</dbReference>
<dbReference type="GO" id="GO:0042273">
    <property type="term" value="P:ribosomal large subunit biogenesis"/>
    <property type="evidence" value="ECO:0000318"/>
    <property type="project" value="GO_Central"/>
</dbReference>
<dbReference type="GO" id="GO:0000054">
    <property type="term" value="P:ribosomal subunit export from nucleus"/>
    <property type="evidence" value="ECO:0007669"/>
    <property type="project" value="EnsemblFungi"/>
</dbReference>
<dbReference type="GO" id="GO:0006364">
    <property type="term" value="P:rRNA processing"/>
    <property type="evidence" value="ECO:0007669"/>
    <property type="project" value="EnsemblFungi"/>
</dbReference>
<dbReference type="CDD" id="cd01897">
    <property type="entry name" value="NOG"/>
    <property type="match status" value="1"/>
</dbReference>
<dbReference type="FunFam" id="1.20.120.1190:FF:000001">
    <property type="entry name" value="Nucleolar GTP-binding protein 1"/>
    <property type="match status" value="1"/>
</dbReference>
<dbReference type="FunFam" id="3.40.50.300:FF:000496">
    <property type="entry name" value="Nucleolar GTP-binding protein 1"/>
    <property type="match status" value="1"/>
</dbReference>
<dbReference type="Gene3D" id="1.20.120.1190">
    <property type="match status" value="1"/>
</dbReference>
<dbReference type="Gene3D" id="3.40.50.300">
    <property type="entry name" value="P-loop containing nucleotide triphosphate hydrolases"/>
    <property type="match status" value="1"/>
</dbReference>
<dbReference type="InterPro" id="IPR031167">
    <property type="entry name" value="G_OBG"/>
</dbReference>
<dbReference type="InterPro" id="IPR006073">
    <property type="entry name" value="GTP-bd"/>
</dbReference>
<dbReference type="InterPro" id="IPR024926">
    <property type="entry name" value="NOG1"/>
</dbReference>
<dbReference type="InterPro" id="IPR041623">
    <property type="entry name" value="NOG1_N"/>
</dbReference>
<dbReference type="InterPro" id="IPR010674">
    <property type="entry name" value="NOG1_Rossman_fold_dom"/>
</dbReference>
<dbReference type="InterPro" id="IPR012973">
    <property type="entry name" value="NOG_C"/>
</dbReference>
<dbReference type="InterPro" id="IPR027417">
    <property type="entry name" value="P-loop_NTPase"/>
</dbReference>
<dbReference type="PANTHER" id="PTHR45759">
    <property type="entry name" value="NUCLEOLAR GTP-BINDING PROTEIN 1"/>
    <property type="match status" value="1"/>
</dbReference>
<dbReference type="Pfam" id="PF06858">
    <property type="entry name" value="NOG1"/>
    <property type="match status" value="1"/>
</dbReference>
<dbReference type="Pfam" id="PF17835">
    <property type="entry name" value="NOG1_N"/>
    <property type="match status" value="1"/>
</dbReference>
<dbReference type="Pfam" id="PF08155">
    <property type="entry name" value="NOGCT"/>
    <property type="match status" value="1"/>
</dbReference>
<dbReference type="PIRSF" id="PIRSF038919">
    <property type="entry name" value="NOG1"/>
    <property type="match status" value="1"/>
</dbReference>
<dbReference type="PRINTS" id="PR00326">
    <property type="entry name" value="GTP1OBG"/>
</dbReference>
<dbReference type="SUPFAM" id="SSF52540">
    <property type="entry name" value="P-loop containing nucleoside triphosphate hydrolases"/>
    <property type="match status" value="1"/>
</dbReference>
<dbReference type="PROSITE" id="PS51710">
    <property type="entry name" value="G_OBG"/>
    <property type="match status" value="1"/>
</dbReference>
<feature type="chain" id="PRO_0000195030" description="Nucleolar GTP-binding protein 1">
    <location>
        <begin position="1"/>
        <end position="642"/>
    </location>
</feature>
<feature type="domain" description="OBG-type G" evidence="2">
    <location>
        <begin position="168"/>
        <end position="340"/>
    </location>
</feature>
<feature type="region of interest" description="Disordered" evidence="3">
    <location>
        <begin position="585"/>
        <end position="642"/>
    </location>
</feature>
<feature type="compositionally biased region" description="Basic and acidic residues" evidence="3">
    <location>
        <begin position="609"/>
        <end position="621"/>
    </location>
</feature>
<feature type="binding site" evidence="2">
    <location>
        <begin position="174"/>
        <end position="181"/>
    </location>
    <ligand>
        <name>GTP</name>
        <dbReference type="ChEBI" id="CHEBI:37565"/>
    </ligand>
</feature>
<feature type="binding site" evidence="2">
    <location>
        <begin position="220"/>
        <end position="224"/>
    </location>
    <ligand>
        <name>GTP</name>
        <dbReference type="ChEBI" id="CHEBI:37565"/>
    </ligand>
</feature>
<feature type="binding site" evidence="2">
    <location>
        <begin position="288"/>
        <end position="291"/>
    </location>
    <ligand>
        <name>GTP</name>
        <dbReference type="ChEBI" id="CHEBI:37565"/>
    </ligand>
</feature>
<gene>
    <name type="primary">NOG1</name>
    <name type="ordered locus">AGR194W</name>
</gene>
<name>NOG1_EREGS</name>
<organism>
    <name type="scientific">Eremothecium gossypii (strain ATCC 10895 / CBS 109.51 / FGSC 9923 / NRRL Y-1056)</name>
    <name type="common">Yeast</name>
    <name type="synonym">Ashbya gossypii</name>
    <dbReference type="NCBI Taxonomy" id="284811"/>
    <lineage>
        <taxon>Eukaryota</taxon>
        <taxon>Fungi</taxon>
        <taxon>Dikarya</taxon>
        <taxon>Ascomycota</taxon>
        <taxon>Saccharomycotina</taxon>
        <taxon>Saccharomycetes</taxon>
        <taxon>Saccharomycetales</taxon>
        <taxon>Saccharomycetaceae</taxon>
        <taxon>Eremothecium</taxon>
    </lineage>
</organism>